<evidence type="ECO:0000250" key="1">
    <source>
        <dbReference type="UniProtKB" id="A0A8I3MKU8"/>
    </source>
</evidence>
<evidence type="ECO:0000250" key="2">
    <source>
        <dbReference type="UniProtKB" id="I6VSD2"/>
    </source>
</evidence>
<evidence type="ECO:0000250" key="3">
    <source>
        <dbReference type="UniProtKB" id="Q9BVK8"/>
    </source>
</evidence>
<evidence type="ECO:0000255" key="4"/>
<evidence type="ECO:0000305" key="5"/>
<evidence type="ECO:0000312" key="6">
    <source>
        <dbReference type="RGD" id="1304706"/>
    </source>
</evidence>
<sequence length="224" mass="25291">MTLFHFGNCFALAYFPYFITYKCSGLSEYNAFWKCVQAGVTYLFVQLCKMLFLATFFPTWEGGIYDFIGEFMKASVDVADLIGLNLVMSRNAGKGEYKIMVAALGWATAELIMSRCIPLWVGARGIEFDWKYIQMSIDSNISLVHYIVASAQVWMITRYDLYHTFRPAVLLLMFLSVYKAFVMETFVHLCSLGSWTALLARAVVTGLLALSTLALYVAVVNVHS</sequence>
<dbReference type="EMBL" id="BC111082">
    <property type="protein sequence ID" value="AAI11083.1"/>
    <property type="molecule type" value="mRNA"/>
</dbReference>
<dbReference type="RefSeq" id="NP_001033583.1">
    <property type="nucleotide sequence ID" value="NM_001038494.1"/>
</dbReference>
<dbReference type="SMR" id="Q2TA63"/>
<dbReference type="FunCoup" id="Q2TA63">
    <property type="interactions" value="2575"/>
</dbReference>
<dbReference type="STRING" id="10116.ENSRNOP00000028514"/>
<dbReference type="PhosphoSitePlus" id="Q2TA63"/>
<dbReference type="PaxDb" id="10116-ENSRNOP00000028514"/>
<dbReference type="GeneID" id="292792"/>
<dbReference type="KEGG" id="rno:292792"/>
<dbReference type="UCSC" id="RGD:1304706">
    <property type="organism name" value="rat"/>
</dbReference>
<dbReference type="AGR" id="RGD:1304706"/>
<dbReference type="CTD" id="10430"/>
<dbReference type="RGD" id="1304706">
    <property type="gene designation" value="Tmem147"/>
</dbReference>
<dbReference type="VEuPathDB" id="HostDB:ENSRNOG00000021006"/>
<dbReference type="eggNOG" id="KOG3236">
    <property type="taxonomic scope" value="Eukaryota"/>
</dbReference>
<dbReference type="HOGENOM" id="CLU_086813_0_0_1"/>
<dbReference type="InParanoid" id="Q2TA63"/>
<dbReference type="OMA" id="SKCVYAG"/>
<dbReference type="OrthoDB" id="7989at9989"/>
<dbReference type="PhylomeDB" id="Q2TA63"/>
<dbReference type="TreeFam" id="TF314086"/>
<dbReference type="PRO" id="PR:Q2TA63"/>
<dbReference type="Proteomes" id="UP000002494">
    <property type="component" value="Chromosome 1"/>
</dbReference>
<dbReference type="Bgee" id="ENSRNOG00000021006">
    <property type="expression patterns" value="Expressed in pancreas and 19 other cell types or tissues"/>
</dbReference>
<dbReference type="GO" id="GO:0005789">
    <property type="term" value="C:endoplasmic reticulum membrane"/>
    <property type="evidence" value="ECO:0000250"/>
    <property type="project" value="UniProtKB"/>
</dbReference>
<dbReference type="GO" id="GO:0160064">
    <property type="term" value="C:multi-pass translocon complex"/>
    <property type="evidence" value="ECO:0000266"/>
    <property type="project" value="RGD"/>
</dbReference>
<dbReference type="GO" id="GO:0031965">
    <property type="term" value="C:nuclear membrane"/>
    <property type="evidence" value="ECO:0000250"/>
    <property type="project" value="UniProtKB"/>
</dbReference>
<dbReference type="GO" id="GO:0005886">
    <property type="term" value="C:plasma membrane"/>
    <property type="evidence" value="ECO:0000250"/>
    <property type="project" value="UniProtKB"/>
</dbReference>
<dbReference type="GO" id="GO:0032991">
    <property type="term" value="C:protein-containing complex"/>
    <property type="evidence" value="ECO:0000266"/>
    <property type="project" value="RGD"/>
</dbReference>
<dbReference type="GO" id="GO:0043022">
    <property type="term" value="F:ribosome binding"/>
    <property type="evidence" value="ECO:0000250"/>
    <property type="project" value="UniProtKB"/>
</dbReference>
<dbReference type="GO" id="GO:0160063">
    <property type="term" value="P:multi-pass transmembrane protein insertion into ER membrane"/>
    <property type="evidence" value="ECO:0000250"/>
    <property type="project" value="UniProtKB"/>
</dbReference>
<dbReference type="GO" id="GO:0036228">
    <property type="term" value="P:protein localization to nuclear inner membrane"/>
    <property type="evidence" value="ECO:0000250"/>
    <property type="project" value="UniProtKB"/>
</dbReference>
<dbReference type="InterPro" id="IPR019164">
    <property type="entry name" value="TMEM147"/>
</dbReference>
<dbReference type="PANTHER" id="PTHR12869:SF0">
    <property type="entry name" value="BOS COMPLEX SUBUNIT TMEM147"/>
    <property type="match status" value="1"/>
</dbReference>
<dbReference type="PANTHER" id="PTHR12869">
    <property type="entry name" value="SMALL SEVEN TRANSMEMBRANE DOMAIN-CONTAINING PROTEIN"/>
    <property type="match status" value="1"/>
</dbReference>
<dbReference type="Pfam" id="PF09767">
    <property type="entry name" value="DUF2053"/>
    <property type="match status" value="1"/>
</dbReference>
<gene>
    <name evidence="6" type="primary">Tmem147</name>
</gene>
<organism>
    <name type="scientific">Rattus norvegicus</name>
    <name type="common">Rat</name>
    <dbReference type="NCBI Taxonomy" id="10116"/>
    <lineage>
        <taxon>Eukaryota</taxon>
        <taxon>Metazoa</taxon>
        <taxon>Chordata</taxon>
        <taxon>Craniata</taxon>
        <taxon>Vertebrata</taxon>
        <taxon>Euteleostomi</taxon>
        <taxon>Mammalia</taxon>
        <taxon>Eutheria</taxon>
        <taxon>Euarchontoglires</taxon>
        <taxon>Glires</taxon>
        <taxon>Rodentia</taxon>
        <taxon>Myomorpha</taxon>
        <taxon>Muroidea</taxon>
        <taxon>Muridae</taxon>
        <taxon>Murinae</taxon>
        <taxon>Rattus</taxon>
    </lineage>
</organism>
<keyword id="KW-1003">Cell membrane</keyword>
<keyword id="KW-0256">Endoplasmic reticulum</keyword>
<keyword id="KW-0472">Membrane</keyword>
<keyword id="KW-0539">Nucleus</keyword>
<keyword id="KW-1185">Reference proteome</keyword>
<keyword id="KW-0812">Transmembrane</keyword>
<keyword id="KW-1133">Transmembrane helix</keyword>
<comment type="function">
    <text evidence="3">Component of the multi-pass translocon (MPT) complex that mediates insertion of multi-pass membrane proteins into the lipid bilayer of membranes. The MPT complex takes over after the SEC61 complex: following membrane insertion of the first few transmembrane segments of proteins by the SEC61 complex, the MPT complex occludes the lateral gate of the SEC61 complex to promote insertion of subsequent transmembrane regions. Also acts as a negative regulator of CHRM3 function, most likely by interfering with its trafficking to the cell membrane. Negatively regulates CHRM3-mediated calcium mobilization and activation of RPS6KA1/p90RSK activity. Regulates LBR localization to the nucleus inner membrane.</text>
</comment>
<comment type="subunit">
    <text evidence="3">Component of the back of Sec61 (BOS) complex, composed of NCLN/Nicalin, NOMO (NOMO1, NOMO2 or NOMO3) and TMEM147. The BOS complex is part of the multi-pass translocon (MPT) complex, composed of three subcomplexes, the GEL complex (composed of RAB5IF/OPTI and TMCO1), the BOS complex (composed of NCLN/Nicalin, NOMO and TMEM147) and the PAT complex (composed of WDR83OS/Asterix and CCDC47). The MPT complex associates with the SEC61 complex. Interacts with CHRM3, CHRM1 and AVPR2. Interacts with LBR; promoting LBR localization to the nucleus inner membrane. Interacts with DHCR7.</text>
</comment>
<comment type="subcellular location">
    <subcellularLocation>
        <location evidence="3">Endoplasmic reticulum membrane</location>
        <topology evidence="4">Multi-pass membrane protein</topology>
    </subcellularLocation>
    <subcellularLocation>
        <location evidence="3">Nucleus membrane</location>
        <topology evidence="4">Multi-pass membrane protein</topology>
    </subcellularLocation>
    <subcellularLocation>
        <location evidence="2">Cell membrane</location>
        <topology evidence="4">Multi-pass membrane protein</topology>
    </subcellularLocation>
</comment>
<comment type="similarity">
    <text evidence="5">Belongs to the TMEM147 family.</text>
</comment>
<feature type="chain" id="PRO_0000271703" description="BOS complex subunit TMEM147">
    <location>
        <begin position="1"/>
        <end position="224"/>
    </location>
</feature>
<feature type="transmembrane region" description="Helical" evidence="1">
    <location>
        <begin position="1"/>
        <end position="21"/>
    </location>
</feature>
<feature type="topological domain" description="Cytoplasmic" evidence="1">
    <location>
        <begin position="22"/>
        <end position="34"/>
    </location>
</feature>
<feature type="transmembrane region" description="Helical" evidence="1">
    <location>
        <begin position="35"/>
        <end position="58"/>
    </location>
</feature>
<feature type="topological domain" description="Lumenal" evidence="1">
    <location>
        <begin position="59"/>
        <end position="66"/>
    </location>
</feature>
<feature type="transmembrane region" description="Helical" evidence="1">
    <location>
        <begin position="67"/>
        <end position="88"/>
    </location>
</feature>
<feature type="topological domain" description="Cytoplasmic" evidence="1">
    <location>
        <begin position="89"/>
        <end position="98"/>
    </location>
</feature>
<feature type="transmembrane region" description="Helical" evidence="1">
    <location>
        <begin position="99"/>
        <end position="124"/>
    </location>
</feature>
<feature type="topological domain" description="Lumenal" evidence="1">
    <location>
        <begin position="125"/>
        <end position="129"/>
    </location>
</feature>
<feature type="transmembrane region" description="Helical" evidence="1">
    <location>
        <begin position="130"/>
        <end position="155"/>
    </location>
</feature>
<feature type="topological domain" description="Cytoplasmic" evidence="1">
    <location>
        <begin position="156"/>
        <end position="164"/>
    </location>
</feature>
<feature type="transmembrane region" description="Helical" evidence="1">
    <location>
        <begin position="165"/>
        <end position="187"/>
    </location>
</feature>
<feature type="topological domain" description="Lumenal" evidence="1">
    <location>
        <begin position="188"/>
        <end position="194"/>
    </location>
</feature>
<feature type="transmembrane region" description="Helical" evidence="1">
    <location>
        <begin position="195"/>
        <end position="216"/>
    </location>
</feature>
<feature type="topological domain" description="Cytoplasmic" evidence="1">
    <location>
        <begin position="217"/>
        <end position="224"/>
    </location>
</feature>
<accession>Q2TA63</accession>
<reference key="1">
    <citation type="journal article" date="2004" name="Genome Res.">
        <title>The status, quality, and expansion of the NIH full-length cDNA project: the Mammalian Gene Collection (MGC).</title>
        <authorList>
            <consortium name="The MGC Project Team"/>
        </authorList>
    </citation>
    <scope>NUCLEOTIDE SEQUENCE [LARGE SCALE MRNA]</scope>
    <source>
        <tissue>Testis</tissue>
    </source>
</reference>
<proteinExistence type="evidence at transcript level"/>
<protein>
    <recommendedName>
        <fullName evidence="5">BOS complex subunit TMEM147</fullName>
    </recommendedName>
    <alternativeName>
        <fullName evidence="5">Transmembrane protein 147</fullName>
    </alternativeName>
</protein>
<name>TM147_RAT</name>